<comment type="function">
    <text evidence="1">Bidirectionally degrades single-stranded DNA into large acid-insoluble oligonucleotides, which are then degraded further into small acid-soluble oligonucleotides.</text>
</comment>
<comment type="catalytic activity">
    <reaction evidence="1">
        <text>Exonucleolytic cleavage in either 5'- to 3'- or 3'- to 5'-direction to yield nucleoside 5'-phosphates.</text>
        <dbReference type="EC" id="3.1.11.6"/>
    </reaction>
</comment>
<comment type="subunit">
    <text evidence="1">Heterooligomer composed of large and small subunits.</text>
</comment>
<comment type="subcellular location">
    <subcellularLocation>
        <location evidence="1">Cytoplasm</location>
    </subcellularLocation>
</comment>
<comment type="similarity">
    <text evidence="1">Belongs to the XseA family.</text>
</comment>
<keyword id="KW-0963">Cytoplasm</keyword>
<keyword id="KW-0269">Exonuclease</keyword>
<keyword id="KW-0378">Hydrolase</keyword>
<keyword id="KW-0540">Nuclease</keyword>
<name>EX7L_HAMD5</name>
<dbReference type="EC" id="3.1.11.6" evidence="1"/>
<dbReference type="EMBL" id="CP001277">
    <property type="protein sequence ID" value="ACQ67934.1"/>
    <property type="molecule type" value="Genomic_DNA"/>
</dbReference>
<dbReference type="RefSeq" id="WP_015873725.1">
    <property type="nucleotide sequence ID" value="NC_012751.1"/>
</dbReference>
<dbReference type="SMR" id="C4K5U1"/>
<dbReference type="STRING" id="572265.HDEF_1282"/>
<dbReference type="GeneID" id="66260982"/>
<dbReference type="KEGG" id="hde:HDEF_1282"/>
<dbReference type="eggNOG" id="COG1570">
    <property type="taxonomic scope" value="Bacteria"/>
</dbReference>
<dbReference type="HOGENOM" id="CLU_023625_3_1_6"/>
<dbReference type="Proteomes" id="UP000002334">
    <property type="component" value="Chromosome"/>
</dbReference>
<dbReference type="GO" id="GO:0005737">
    <property type="term" value="C:cytoplasm"/>
    <property type="evidence" value="ECO:0007669"/>
    <property type="project" value="UniProtKB-SubCell"/>
</dbReference>
<dbReference type="GO" id="GO:0009318">
    <property type="term" value="C:exodeoxyribonuclease VII complex"/>
    <property type="evidence" value="ECO:0007669"/>
    <property type="project" value="InterPro"/>
</dbReference>
<dbReference type="GO" id="GO:0008855">
    <property type="term" value="F:exodeoxyribonuclease VII activity"/>
    <property type="evidence" value="ECO:0007669"/>
    <property type="project" value="UniProtKB-UniRule"/>
</dbReference>
<dbReference type="GO" id="GO:0003676">
    <property type="term" value="F:nucleic acid binding"/>
    <property type="evidence" value="ECO:0007669"/>
    <property type="project" value="InterPro"/>
</dbReference>
<dbReference type="GO" id="GO:0006308">
    <property type="term" value="P:DNA catabolic process"/>
    <property type="evidence" value="ECO:0007669"/>
    <property type="project" value="UniProtKB-UniRule"/>
</dbReference>
<dbReference type="CDD" id="cd04489">
    <property type="entry name" value="ExoVII_LU_OBF"/>
    <property type="match status" value="1"/>
</dbReference>
<dbReference type="HAMAP" id="MF_00378">
    <property type="entry name" value="Exonuc_7_L"/>
    <property type="match status" value="1"/>
</dbReference>
<dbReference type="InterPro" id="IPR003753">
    <property type="entry name" value="Exonuc_VII_L"/>
</dbReference>
<dbReference type="InterPro" id="IPR020579">
    <property type="entry name" value="Exonuc_VII_lsu_C"/>
</dbReference>
<dbReference type="InterPro" id="IPR025824">
    <property type="entry name" value="OB-fold_nuc-bd_dom"/>
</dbReference>
<dbReference type="NCBIfam" id="TIGR00237">
    <property type="entry name" value="xseA"/>
    <property type="match status" value="1"/>
</dbReference>
<dbReference type="PANTHER" id="PTHR30008">
    <property type="entry name" value="EXODEOXYRIBONUCLEASE 7 LARGE SUBUNIT"/>
    <property type="match status" value="1"/>
</dbReference>
<dbReference type="PANTHER" id="PTHR30008:SF0">
    <property type="entry name" value="EXODEOXYRIBONUCLEASE 7 LARGE SUBUNIT"/>
    <property type="match status" value="1"/>
</dbReference>
<dbReference type="Pfam" id="PF02601">
    <property type="entry name" value="Exonuc_VII_L"/>
    <property type="match status" value="1"/>
</dbReference>
<dbReference type="Pfam" id="PF13742">
    <property type="entry name" value="tRNA_anti_2"/>
    <property type="match status" value="1"/>
</dbReference>
<sequence length="448" mass="51226">MPLSHFSDLLTVSQLNIRVRDILEKNIGQIWLMAEISNFSQPSSGHWYFTLKDERTQVRCTMFRNNNRHIFFKVQNGLQVLVRACVSLYEPRGEYQLIVESMEPAGEGILRQKFEQLKKKLAAEGLFAEKYKKPLPDSVKQLGVITSISGAALFDILKVLQHRDPSLPVVIYPTKVQGEYAPSQIVKALSIANRRAECDLVILARGGGSLEDLSCFNDERVARAIFDSDLPIVSAIGHETDVSIADLVADLRASTPSAAAERVTRDRRDIIQKLGSHQQRMAMAMDYYFSKLRQRFVHLSHCIEQQHPQLELERQKMQLIHFKISMEKIIQAKLKGLIHQEAHLKKNVLRRAPQIQIYQYQKQIQEEFHQLKAAMERKIHHYVQRFAVVSSRLETVSPLATLARGYSVTCFSSGSMLKKIEQVQIGDELNTRLQGGWIKSQVLEIKKN</sequence>
<reference key="1">
    <citation type="journal article" date="2009" name="Proc. Natl. Acad. Sci. U.S.A.">
        <title>Hamiltonella defensa, genome evolution of protective bacterial endosymbiont from pathogenic ancestors.</title>
        <authorList>
            <person name="Degnan P.H."/>
            <person name="Yu Y."/>
            <person name="Sisneros N."/>
            <person name="Wing R.A."/>
            <person name="Moran N.A."/>
        </authorList>
    </citation>
    <scope>NUCLEOTIDE SEQUENCE [LARGE SCALE GENOMIC DNA]</scope>
    <source>
        <strain>5AT</strain>
    </source>
</reference>
<gene>
    <name evidence="1" type="primary">xseA</name>
    <name type="ordered locus">HDEF_1282</name>
</gene>
<organism>
    <name type="scientific">Hamiltonella defensa subsp. Acyrthosiphon pisum (strain 5AT)</name>
    <dbReference type="NCBI Taxonomy" id="572265"/>
    <lineage>
        <taxon>Bacteria</taxon>
        <taxon>Pseudomonadati</taxon>
        <taxon>Pseudomonadota</taxon>
        <taxon>Gammaproteobacteria</taxon>
        <taxon>Enterobacterales</taxon>
        <taxon>Enterobacteriaceae</taxon>
        <taxon>aphid secondary symbionts</taxon>
        <taxon>Candidatus Hamiltonella</taxon>
    </lineage>
</organism>
<feature type="chain" id="PRO_1000205677" description="Exodeoxyribonuclease 7 large subunit">
    <location>
        <begin position="1"/>
        <end position="448"/>
    </location>
</feature>
<accession>C4K5U1</accession>
<protein>
    <recommendedName>
        <fullName evidence="1">Exodeoxyribonuclease 7 large subunit</fullName>
        <ecNumber evidence="1">3.1.11.6</ecNumber>
    </recommendedName>
    <alternativeName>
        <fullName evidence="1">Exodeoxyribonuclease VII large subunit</fullName>
        <shortName evidence="1">Exonuclease VII large subunit</shortName>
    </alternativeName>
</protein>
<proteinExistence type="inferred from homology"/>
<evidence type="ECO:0000255" key="1">
    <source>
        <dbReference type="HAMAP-Rule" id="MF_00378"/>
    </source>
</evidence>